<reference key="1">
    <citation type="journal article" date="2010" name="J. Bacteriol.">
        <title>Genome sequence of the dioxin-mineralizing bacterium Sphingomonas wittichii RW1.</title>
        <authorList>
            <person name="Miller T.R."/>
            <person name="Delcher A.L."/>
            <person name="Salzberg S.L."/>
            <person name="Saunders E."/>
            <person name="Detter J.C."/>
            <person name="Halden R.U."/>
        </authorList>
    </citation>
    <scope>NUCLEOTIDE SEQUENCE [LARGE SCALE GENOMIC DNA]</scope>
    <source>
        <strain>DSM 6014 / CCUG 31198 / JCM 15750 / NBRC 105917 / EY 4224 / RW1</strain>
    </source>
</reference>
<dbReference type="EC" id="2.2.1.7" evidence="1"/>
<dbReference type="EMBL" id="CP000699">
    <property type="protein sequence ID" value="ABQ67825.1"/>
    <property type="molecule type" value="Genomic_DNA"/>
</dbReference>
<dbReference type="SMR" id="A5V6A9"/>
<dbReference type="STRING" id="392499.Swit_1461"/>
<dbReference type="PaxDb" id="392499-Swit_1461"/>
<dbReference type="KEGG" id="swi:Swit_1461"/>
<dbReference type="eggNOG" id="COG1154">
    <property type="taxonomic scope" value="Bacteria"/>
</dbReference>
<dbReference type="HOGENOM" id="CLU_009227_1_4_5"/>
<dbReference type="OrthoDB" id="9803371at2"/>
<dbReference type="UniPathway" id="UPA00064">
    <property type="reaction ID" value="UER00091"/>
</dbReference>
<dbReference type="Proteomes" id="UP000001989">
    <property type="component" value="Chromosome"/>
</dbReference>
<dbReference type="GO" id="GO:0008661">
    <property type="term" value="F:1-deoxy-D-xylulose-5-phosphate synthase activity"/>
    <property type="evidence" value="ECO:0007669"/>
    <property type="project" value="UniProtKB-UniRule"/>
</dbReference>
<dbReference type="GO" id="GO:0000287">
    <property type="term" value="F:magnesium ion binding"/>
    <property type="evidence" value="ECO:0007669"/>
    <property type="project" value="UniProtKB-UniRule"/>
</dbReference>
<dbReference type="GO" id="GO:0030976">
    <property type="term" value="F:thiamine pyrophosphate binding"/>
    <property type="evidence" value="ECO:0007669"/>
    <property type="project" value="UniProtKB-UniRule"/>
</dbReference>
<dbReference type="GO" id="GO:0052865">
    <property type="term" value="P:1-deoxy-D-xylulose 5-phosphate biosynthetic process"/>
    <property type="evidence" value="ECO:0007669"/>
    <property type="project" value="UniProtKB-UniPathway"/>
</dbReference>
<dbReference type="GO" id="GO:0019682">
    <property type="term" value="P:glyceraldehyde-3-phosphate metabolic process"/>
    <property type="evidence" value="ECO:0007669"/>
    <property type="project" value="UniProtKB-ARBA"/>
</dbReference>
<dbReference type="GO" id="GO:0016114">
    <property type="term" value="P:terpenoid biosynthetic process"/>
    <property type="evidence" value="ECO:0007669"/>
    <property type="project" value="UniProtKB-UniRule"/>
</dbReference>
<dbReference type="GO" id="GO:0009228">
    <property type="term" value="P:thiamine biosynthetic process"/>
    <property type="evidence" value="ECO:0007669"/>
    <property type="project" value="UniProtKB-UniRule"/>
</dbReference>
<dbReference type="CDD" id="cd02007">
    <property type="entry name" value="TPP_DXS"/>
    <property type="match status" value="1"/>
</dbReference>
<dbReference type="CDD" id="cd07033">
    <property type="entry name" value="TPP_PYR_DXS_TK_like"/>
    <property type="match status" value="1"/>
</dbReference>
<dbReference type="FunFam" id="3.40.50.920:FF:000002">
    <property type="entry name" value="1-deoxy-D-xylulose-5-phosphate synthase"/>
    <property type="match status" value="1"/>
</dbReference>
<dbReference type="FunFam" id="3.40.50.970:FF:000005">
    <property type="entry name" value="1-deoxy-D-xylulose-5-phosphate synthase"/>
    <property type="match status" value="1"/>
</dbReference>
<dbReference type="Gene3D" id="3.40.50.920">
    <property type="match status" value="1"/>
</dbReference>
<dbReference type="Gene3D" id="3.40.50.970">
    <property type="match status" value="2"/>
</dbReference>
<dbReference type="HAMAP" id="MF_00315">
    <property type="entry name" value="DXP_synth"/>
    <property type="match status" value="1"/>
</dbReference>
<dbReference type="InterPro" id="IPR005477">
    <property type="entry name" value="Dxylulose-5-P_synthase"/>
</dbReference>
<dbReference type="InterPro" id="IPR029061">
    <property type="entry name" value="THDP-binding"/>
</dbReference>
<dbReference type="InterPro" id="IPR009014">
    <property type="entry name" value="Transketo_C/PFOR_II"/>
</dbReference>
<dbReference type="InterPro" id="IPR005475">
    <property type="entry name" value="Transketolase-like_Pyr-bd"/>
</dbReference>
<dbReference type="InterPro" id="IPR033248">
    <property type="entry name" value="Transketolase_C"/>
</dbReference>
<dbReference type="InterPro" id="IPR049557">
    <property type="entry name" value="Transketolase_CS"/>
</dbReference>
<dbReference type="NCBIfam" id="TIGR00204">
    <property type="entry name" value="dxs"/>
    <property type="match status" value="1"/>
</dbReference>
<dbReference type="NCBIfam" id="NF003933">
    <property type="entry name" value="PRK05444.2-2"/>
    <property type="match status" value="1"/>
</dbReference>
<dbReference type="PANTHER" id="PTHR43322">
    <property type="entry name" value="1-D-DEOXYXYLULOSE 5-PHOSPHATE SYNTHASE-RELATED"/>
    <property type="match status" value="1"/>
</dbReference>
<dbReference type="PANTHER" id="PTHR43322:SF5">
    <property type="entry name" value="1-DEOXY-D-XYLULOSE-5-PHOSPHATE SYNTHASE, CHLOROPLASTIC"/>
    <property type="match status" value="1"/>
</dbReference>
<dbReference type="Pfam" id="PF13292">
    <property type="entry name" value="DXP_synthase_N"/>
    <property type="match status" value="1"/>
</dbReference>
<dbReference type="Pfam" id="PF02779">
    <property type="entry name" value="Transket_pyr"/>
    <property type="match status" value="1"/>
</dbReference>
<dbReference type="Pfam" id="PF02780">
    <property type="entry name" value="Transketolase_C"/>
    <property type="match status" value="1"/>
</dbReference>
<dbReference type="SMART" id="SM00861">
    <property type="entry name" value="Transket_pyr"/>
    <property type="match status" value="1"/>
</dbReference>
<dbReference type="SUPFAM" id="SSF52518">
    <property type="entry name" value="Thiamin diphosphate-binding fold (THDP-binding)"/>
    <property type="match status" value="2"/>
</dbReference>
<dbReference type="SUPFAM" id="SSF52922">
    <property type="entry name" value="TK C-terminal domain-like"/>
    <property type="match status" value="1"/>
</dbReference>
<dbReference type="PROSITE" id="PS00801">
    <property type="entry name" value="TRANSKETOLASE_1"/>
    <property type="match status" value="1"/>
</dbReference>
<comment type="function">
    <text evidence="1">Catalyzes the acyloin condensation reaction between C atoms 2 and 3 of pyruvate and glyceraldehyde 3-phosphate to yield 1-deoxy-D-xylulose-5-phosphate (DXP).</text>
</comment>
<comment type="catalytic activity">
    <reaction evidence="1">
        <text>D-glyceraldehyde 3-phosphate + pyruvate + H(+) = 1-deoxy-D-xylulose 5-phosphate + CO2</text>
        <dbReference type="Rhea" id="RHEA:12605"/>
        <dbReference type="ChEBI" id="CHEBI:15361"/>
        <dbReference type="ChEBI" id="CHEBI:15378"/>
        <dbReference type="ChEBI" id="CHEBI:16526"/>
        <dbReference type="ChEBI" id="CHEBI:57792"/>
        <dbReference type="ChEBI" id="CHEBI:59776"/>
        <dbReference type="EC" id="2.2.1.7"/>
    </reaction>
</comment>
<comment type="cofactor">
    <cofactor evidence="1">
        <name>Mg(2+)</name>
        <dbReference type="ChEBI" id="CHEBI:18420"/>
    </cofactor>
    <text evidence="1">Binds 1 Mg(2+) ion per subunit.</text>
</comment>
<comment type="cofactor">
    <cofactor evidence="1">
        <name>thiamine diphosphate</name>
        <dbReference type="ChEBI" id="CHEBI:58937"/>
    </cofactor>
    <text evidence="1">Binds 1 thiamine pyrophosphate per subunit.</text>
</comment>
<comment type="pathway">
    <text evidence="1">Metabolic intermediate biosynthesis; 1-deoxy-D-xylulose 5-phosphate biosynthesis; 1-deoxy-D-xylulose 5-phosphate from D-glyceraldehyde 3-phosphate and pyruvate: step 1/1.</text>
</comment>
<comment type="subunit">
    <text evidence="1">Homodimer.</text>
</comment>
<comment type="similarity">
    <text evidence="1">Belongs to the transketolase family. DXPS subfamily.</text>
</comment>
<accession>A5V6A9</accession>
<evidence type="ECO:0000255" key="1">
    <source>
        <dbReference type="HAMAP-Rule" id="MF_00315"/>
    </source>
</evidence>
<name>DXS_RHIWR</name>
<organism>
    <name type="scientific">Rhizorhabdus wittichii (strain DSM 6014 / CCUG 31198 / JCM 15750 / NBRC 105917 / EY 4224 / RW1)</name>
    <name type="common">Sphingomonas wittichii</name>
    <dbReference type="NCBI Taxonomy" id="392499"/>
    <lineage>
        <taxon>Bacteria</taxon>
        <taxon>Pseudomonadati</taxon>
        <taxon>Pseudomonadota</taxon>
        <taxon>Alphaproteobacteria</taxon>
        <taxon>Sphingomonadales</taxon>
        <taxon>Sphingomonadaceae</taxon>
        <taxon>Rhizorhabdus</taxon>
    </lineage>
</organism>
<protein>
    <recommendedName>
        <fullName evidence="1">1-deoxy-D-xylulose-5-phosphate synthase</fullName>
        <ecNumber evidence="1">2.2.1.7</ecNumber>
    </recommendedName>
    <alternativeName>
        <fullName evidence="1">1-deoxyxylulose-5-phosphate synthase</fullName>
        <shortName evidence="1">DXP synthase</shortName>
        <shortName evidence="1">DXPS</shortName>
    </alternativeName>
</protein>
<keyword id="KW-0414">Isoprene biosynthesis</keyword>
<keyword id="KW-0460">Magnesium</keyword>
<keyword id="KW-0479">Metal-binding</keyword>
<keyword id="KW-1185">Reference proteome</keyword>
<keyword id="KW-0784">Thiamine biosynthesis</keyword>
<keyword id="KW-0786">Thiamine pyrophosphate</keyword>
<keyword id="KW-0808">Transferase</keyword>
<proteinExistence type="inferred from homology"/>
<sequence length="639" mass="67810">MNDRPPTPLLDTVSTPEDLRRLKPADLRQLADELRAEMISAVSVTGGHLGAGLGVVELTVALHYVFDTPRDVLIWDVGHQAYPHKILTGRRDRIRTLRQGGGLSGFTKRSESEYDPFGAAHSSTSISAALGFAVANKLANKEGRAIAVIGDGAMSAGMAYEAMNNAKQAGNRLIVILNDNDMSIAPPVGALSAYLAKIVSSRPFLSMRGFAKRVAQKLPRPIHDFAKRSEEYARGMATGGTLFEELGFYYVGPVDGHNLDHLLPILENVRDGDHGPILIHVVTNKGKGYAPAEAAADKYHGVQKFDVVSGVQAKAPPGPPSYTGVFADALVAEAKRDDRICAITAAMPSGTGLDKFGKAFPERSFDVGIAEQHAVTFAAGLAAQGYRPFCAIYSTFLQRAYDQVVHDVAIQNLPVRFAIDRAGLVGADGSTHAGSFDITYLATLPNMVVMAAADEAELVHMVHTAAVHDSGPIALRYPRGNGVGVALPAAPERLAIGKGRIVREGKTVALLSLGTRLGEALRAADQLDALGLSTTVADLRFAKPLDEAMIQTLLTSHEVAVTIEEGAIGGLGAHVLTLASDLGLIDGGLKLRTMRLPDAFQEHDKPEKQYAEAGLDAESIVATVLAALHRNSKGLEESA</sequence>
<feature type="chain" id="PRO_1000019083" description="1-deoxy-D-xylulose-5-phosphate synthase">
    <location>
        <begin position="1"/>
        <end position="639"/>
    </location>
</feature>
<feature type="binding site" evidence="1">
    <location>
        <position position="79"/>
    </location>
    <ligand>
        <name>thiamine diphosphate</name>
        <dbReference type="ChEBI" id="CHEBI:58937"/>
    </ligand>
</feature>
<feature type="binding site" evidence="1">
    <location>
        <begin position="120"/>
        <end position="122"/>
    </location>
    <ligand>
        <name>thiamine diphosphate</name>
        <dbReference type="ChEBI" id="CHEBI:58937"/>
    </ligand>
</feature>
<feature type="binding site" evidence="1">
    <location>
        <position position="151"/>
    </location>
    <ligand>
        <name>Mg(2+)</name>
        <dbReference type="ChEBI" id="CHEBI:18420"/>
    </ligand>
</feature>
<feature type="binding site" evidence="1">
    <location>
        <begin position="152"/>
        <end position="153"/>
    </location>
    <ligand>
        <name>thiamine diphosphate</name>
        <dbReference type="ChEBI" id="CHEBI:58937"/>
    </ligand>
</feature>
<feature type="binding site" evidence="1">
    <location>
        <position position="180"/>
    </location>
    <ligand>
        <name>Mg(2+)</name>
        <dbReference type="ChEBI" id="CHEBI:18420"/>
    </ligand>
</feature>
<feature type="binding site" evidence="1">
    <location>
        <position position="180"/>
    </location>
    <ligand>
        <name>thiamine diphosphate</name>
        <dbReference type="ChEBI" id="CHEBI:58937"/>
    </ligand>
</feature>
<feature type="binding site" evidence="1">
    <location>
        <position position="289"/>
    </location>
    <ligand>
        <name>thiamine diphosphate</name>
        <dbReference type="ChEBI" id="CHEBI:58937"/>
    </ligand>
</feature>
<feature type="binding site" evidence="1">
    <location>
        <position position="371"/>
    </location>
    <ligand>
        <name>thiamine diphosphate</name>
        <dbReference type="ChEBI" id="CHEBI:58937"/>
    </ligand>
</feature>
<gene>
    <name evidence="1" type="primary">dxs</name>
    <name type="ordered locus">Swit_1461</name>
</gene>